<sequence>MLEDTQLVWVRDAAEGYIQGRITEIGAKEFEVTPTDRKYPKRTCHFDDIHSSCDGPQDHDDNCELMLLNEATFLDNLKTRYYKDKIYTYVANILIAVNPYREIKELYAPDTIKKYNGRSLGELPPHVFAIADKAIRDMRVYKLSQSIIVSGESGAGKTESTKYLLKYLCYSHDSAGPIETKILDANPVLEAFGNAKTTRNNNSSRFGKFIEVHYDAKCQVVGGYISHYLLEKSRICTQSAEERNYHVFYMLLAGAPQQLRDKLSLGKPDDYRYLSGCTQYFANAKTEQLIPGSQKSKNHQQKGPLKDPIIDDYQHFHNLDKALGRLGLSDTEKLGIYSLVAAVLHLGNIAFEEIPDDVRGGCQVSEASEQSLTITSGLLGVDQTELRTALVSRVMQSKGGGFKGTVIMVPLKIYEASNARDALAKAIYSRLFDRIVGLINQSIPFQASNFYIGVLDIAGFEYFTVNSFEQFCINYCNEKLQKFFNDNILKNEQELYKREGLNVPEITFTDNQDIIELIEAKSNGIFTLLDEESKLPKPSYSHFTAEVHKSWANHYRLGLPRSSRLKAHRTLRDEEGFLVRHFAGAVCYNTEQFIEKNNDALHASLEGLVQECDNPLLQTLFPSGSSTSVRGKLNFISVGSKFKTQLGELMEKLEQNGTNFIRCIKPNSKMIDRQFEGSLALAQLKCSGTISVLELMEHGYPSRVLFADLYSMYKSVLPPELVSLPARTFCEAMFQSLNLSAKDFKFGITKVFFRPGKFVEFDRIMRSDPENMLAIVAKVKKWLIRSRWVKSALGALCVIKLRNRIIYRNKCVLIAQRIARGFLARKQHRPRYQGIGKINKIRTNTLKTIEIASGLKMGREEIISGVNDIYRQIDDAIKKIKMNPRITQREMDSMYTVVMANMNKLTVDLNTKLKEQQQAEEQERLRKIQEALEAERAAKEAEEQRQREEIENKRLKAEMETRRKAAEAQRLRQEEEDRRAALALQEQLEKEAKDDAKYRQQLEQERRDHELALRLANESNGQVEDSPPVIRNGVNDASPMGPNKLIRSENVRAQQQALGKQKYDLSKWKYSELRDAINTSCDIELLEACRQEFHRRLKVYHAWKAKNRKRTTMDENERAPRSVMEAAFKQPPLVQPIQEIVTAQHRYFRIPFMRANAPDNTKRGLWYAHFDGQWIARQMELHADKPPILLVAGTDDMQMCELSLEETGLTRKRGAEILEHEFNREWERNGGKAYKNLGAAKPNGPAAAMQKQQ</sequence>
<evidence type="ECO:0000255" key="1"/>
<evidence type="ECO:0000255" key="2">
    <source>
        <dbReference type="PROSITE-ProRule" id="PRU00116"/>
    </source>
</evidence>
<evidence type="ECO:0000255" key="3">
    <source>
        <dbReference type="PROSITE-ProRule" id="PRU00782"/>
    </source>
</evidence>
<evidence type="ECO:0000255" key="4">
    <source>
        <dbReference type="PROSITE-ProRule" id="PRU01190"/>
    </source>
</evidence>
<evidence type="ECO:0000256" key="5">
    <source>
        <dbReference type="SAM" id="MobiDB-lite"/>
    </source>
</evidence>
<evidence type="ECO:0000269" key="6">
    <source>
    </source>
</evidence>
<evidence type="ECO:0000269" key="7">
    <source>
    </source>
</evidence>
<evidence type="ECO:0000305" key="8"/>
<protein>
    <recommendedName>
        <fullName>Myosin heavy chain 95F</fullName>
    </recommendedName>
    <alternativeName>
        <fullName>95F MHC</fullName>
    </alternativeName>
    <alternativeName>
        <fullName>Protein jaguar</fullName>
    </alternativeName>
</protein>
<gene>
    <name type="primary">jar</name>
    <name type="synonym">Mhc95F</name>
    <name type="ORF">CG5695</name>
</gene>
<feature type="chain" id="PRO_0000123389" description="Myosin heavy chain 95F">
    <location>
        <begin position="1"/>
        <end position="1253"/>
    </location>
</feature>
<feature type="domain" description="Myosin N-terminal SH3-like" evidence="4">
    <location>
        <begin position="3"/>
        <end position="54"/>
    </location>
</feature>
<feature type="domain" description="Myosin motor" evidence="3">
    <location>
        <begin position="57"/>
        <end position="766"/>
    </location>
</feature>
<feature type="domain" description="IQ" evidence="2">
    <location>
        <begin position="808"/>
        <end position="837"/>
    </location>
</feature>
<feature type="region of interest" description="Actin-binding">
    <location>
        <begin position="647"/>
        <end position="666"/>
    </location>
</feature>
<feature type="region of interest" description="Hydrophobic region">
    <location>
        <begin position="1187"/>
        <end position="1193"/>
    </location>
</feature>
<feature type="region of interest" description="Disordered" evidence="5">
    <location>
        <begin position="1233"/>
        <end position="1253"/>
    </location>
</feature>
<feature type="coiled-coil region" evidence="1">
    <location>
        <begin position="900"/>
        <end position="1022"/>
    </location>
</feature>
<feature type="binding site">
    <location>
        <begin position="151"/>
        <end position="158"/>
    </location>
    <ligand>
        <name>ATP</name>
        <dbReference type="ChEBI" id="CHEBI:30616"/>
    </ligand>
</feature>
<feature type="splice variant" id="VSP_003343" description="In isoform H." evidence="8">
    <original>R</original>
    <variation>SFSQVVSNIASRYLNK</variation>
    <location>
        <position position="1047"/>
    </location>
</feature>
<feature type="splice variant" id="VSP_003344" description="In isoform I." evidence="8">
    <original>SENVRAQQQALGKQKYDLSKWKYSEL</original>
    <variation>YSTLYELPMSTTLVNFVNLFLLSQKH</variation>
    <location>
        <begin position="1048"/>
        <end position="1073"/>
    </location>
</feature>
<feature type="splice variant" id="VSP_003345" description="In isoform I." evidence="8">
    <location>
        <begin position="1074"/>
        <end position="1253"/>
    </location>
</feature>
<feature type="sequence conflict" description="In Ref. 1; CAA47462." evidence="8" ref="1">
    <original>V</original>
    <variation>M</variation>
    <location>
        <position position="220"/>
    </location>
</feature>
<feature type="sequence conflict" description="In Ref. 1; CAA47462." evidence="8" ref="1">
    <original>V</original>
    <variation>L</variation>
    <location>
        <position position="1051"/>
    </location>
</feature>
<feature type="sequence conflict" description="In Ref. 1; CAA47462." evidence="8" ref="1">
    <original>R</original>
    <variation>P</variation>
    <location>
        <position position="1121"/>
    </location>
</feature>
<name>MYS9_DROME</name>
<accession>Q01989</accession>
<accession>A4V3C6</accession>
<accession>Q59DV3</accession>
<accession>Q59DV4</accession>
<accession>Q9VCA4</accession>
<dbReference type="EMBL" id="X67077">
    <property type="protein sequence ID" value="CAA47462.1"/>
    <property type="molecule type" value="mRNA"/>
</dbReference>
<dbReference type="EMBL" id="AE014297">
    <property type="protein sequence ID" value="AAF56269.3"/>
    <property type="molecule type" value="Genomic_DNA"/>
</dbReference>
<dbReference type="EMBL" id="AE014297">
    <property type="protein sequence ID" value="AAN13992.1"/>
    <property type="molecule type" value="Genomic_DNA"/>
</dbReference>
<dbReference type="EMBL" id="AE014297">
    <property type="protein sequence ID" value="AAX52973.2"/>
    <property type="molecule type" value="Genomic_DNA"/>
</dbReference>
<dbReference type="EMBL" id="AE014297">
    <property type="protein sequence ID" value="AAX52974.2"/>
    <property type="molecule type" value="Genomic_DNA"/>
</dbReference>
<dbReference type="EMBL" id="AE014297">
    <property type="protein sequence ID" value="AAX52975.2"/>
    <property type="molecule type" value="Genomic_DNA"/>
</dbReference>
<dbReference type="EMBL" id="AE014297">
    <property type="protein sequence ID" value="AAX52976.2"/>
    <property type="molecule type" value="Genomic_DNA"/>
</dbReference>
<dbReference type="EMBL" id="BT004859">
    <property type="protein sequence ID" value="AAO45215.1"/>
    <property type="status" value="ALT_FRAME"/>
    <property type="molecule type" value="mRNA"/>
</dbReference>
<dbReference type="PIR" id="A44400">
    <property type="entry name" value="A44400"/>
</dbReference>
<dbReference type="RefSeq" id="NP_001014647.2">
    <molecule id="Q01989-1"/>
    <property type="nucleotide sequence ID" value="NM_001014647.3"/>
</dbReference>
<dbReference type="RefSeq" id="NP_001014648.2">
    <molecule id="Q01989-1"/>
    <property type="nucleotide sequence ID" value="NM_001014648.3"/>
</dbReference>
<dbReference type="RefSeq" id="NP_001014649.2">
    <molecule id="Q01989-3"/>
    <property type="nucleotide sequence ID" value="NM_001014649.3"/>
</dbReference>
<dbReference type="RefSeq" id="NP_001014650.2">
    <molecule id="Q01989-2"/>
    <property type="nucleotide sequence ID" value="NM_001014650.3"/>
</dbReference>
<dbReference type="RefSeq" id="NP_001262905.1">
    <molecule id="Q01989-2"/>
    <property type="nucleotide sequence ID" value="NM_001275976.1"/>
</dbReference>
<dbReference type="RefSeq" id="NP_001262906.1">
    <molecule id="Q01989-1"/>
    <property type="nucleotide sequence ID" value="NM_001275977.2"/>
</dbReference>
<dbReference type="RefSeq" id="NP_524478.4">
    <molecule id="Q01989-1"/>
    <property type="nucleotide sequence ID" value="NM_079754.4"/>
</dbReference>
<dbReference type="RefSeq" id="NP_732976.1">
    <molecule id="Q01989-1"/>
    <property type="nucleotide sequence ID" value="NM_170138.3"/>
</dbReference>
<dbReference type="SMR" id="Q01989"/>
<dbReference type="BioGRID" id="67817">
    <property type="interactions" value="35"/>
</dbReference>
<dbReference type="FunCoup" id="Q01989">
    <property type="interactions" value="341"/>
</dbReference>
<dbReference type="IntAct" id="Q01989">
    <property type="interactions" value="12"/>
</dbReference>
<dbReference type="STRING" id="7227.FBpp0290582"/>
<dbReference type="PaxDb" id="7227-FBpp0290582"/>
<dbReference type="DNASU" id="42889"/>
<dbReference type="EnsemblMetazoa" id="FBtr0084636">
    <molecule id="Q01989-1"/>
    <property type="protein sequence ID" value="FBpp0084020"/>
    <property type="gene ID" value="FBgn0011225"/>
</dbReference>
<dbReference type="EnsemblMetazoa" id="FBtr0301367">
    <molecule id="Q01989-1"/>
    <property type="protein sequence ID" value="FBpp0290581"/>
    <property type="gene ID" value="FBgn0011225"/>
</dbReference>
<dbReference type="EnsemblMetazoa" id="FBtr0301368">
    <molecule id="Q01989-2"/>
    <property type="protein sequence ID" value="FBpp0290582"/>
    <property type="gene ID" value="FBgn0011225"/>
</dbReference>
<dbReference type="EnsemblMetazoa" id="FBtr0301369">
    <molecule id="Q01989-3"/>
    <property type="protein sequence ID" value="FBpp0290583"/>
    <property type="gene ID" value="FBgn0011225"/>
</dbReference>
<dbReference type="EnsemblMetazoa" id="FBtr0301370">
    <molecule id="Q01989-1"/>
    <property type="protein sequence ID" value="FBpp0290584"/>
    <property type="gene ID" value="FBgn0011225"/>
</dbReference>
<dbReference type="EnsemblMetazoa" id="FBtr0301371">
    <molecule id="Q01989-1"/>
    <property type="protein sequence ID" value="FBpp0290585"/>
    <property type="gene ID" value="FBgn0011225"/>
</dbReference>
<dbReference type="EnsemblMetazoa" id="FBtr0334871">
    <molecule id="Q01989-2"/>
    <property type="protein sequence ID" value="FBpp0306894"/>
    <property type="gene ID" value="FBgn0011225"/>
</dbReference>
<dbReference type="EnsemblMetazoa" id="FBtr0334872">
    <molecule id="Q01989-1"/>
    <property type="protein sequence ID" value="FBpp0306895"/>
    <property type="gene ID" value="FBgn0011225"/>
</dbReference>
<dbReference type="GeneID" id="42889"/>
<dbReference type="KEGG" id="dme:Dmel_CG5695"/>
<dbReference type="AGR" id="FB:FBgn0011225"/>
<dbReference type="CTD" id="42889"/>
<dbReference type="FlyBase" id="FBgn0011225">
    <property type="gene designation" value="jar"/>
</dbReference>
<dbReference type="VEuPathDB" id="VectorBase:FBgn0011225"/>
<dbReference type="eggNOG" id="KOG0163">
    <property type="taxonomic scope" value="Eukaryota"/>
</dbReference>
<dbReference type="GeneTree" id="ENSGT00940000156078"/>
<dbReference type="InParanoid" id="Q01989"/>
<dbReference type="OMA" id="LNKGCTQ"/>
<dbReference type="OrthoDB" id="6108017at2759"/>
<dbReference type="Reactome" id="R-DME-190873">
    <property type="pathway name" value="Gap junction degradation"/>
</dbReference>
<dbReference type="Reactome" id="R-DME-9013418">
    <property type="pathway name" value="RHOBTB2 GTPase cycle"/>
</dbReference>
<dbReference type="Reactome" id="R-DME-9013420">
    <property type="pathway name" value="RHOU GTPase cycle"/>
</dbReference>
<dbReference type="Reactome" id="R-DME-9013422">
    <property type="pathway name" value="RHOBTB1 GTPase cycle"/>
</dbReference>
<dbReference type="SignaLink" id="Q01989"/>
<dbReference type="BioGRID-ORCS" id="42889">
    <property type="hits" value="0 hits in 1 CRISPR screen"/>
</dbReference>
<dbReference type="GenomeRNAi" id="42889"/>
<dbReference type="PRO" id="PR:Q01989"/>
<dbReference type="Proteomes" id="UP000000803">
    <property type="component" value="Chromosome 3R"/>
</dbReference>
<dbReference type="Bgee" id="FBgn0011225">
    <property type="expression patterns" value="Expressed in adult Malpighian tubule principal cell of initial segment in Malpighian tubule and 226 other cell types or tissues"/>
</dbReference>
<dbReference type="ExpressionAtlas" id="Q01989">
    <property type="expression patterns" value="baseline and differential"/>
</dbReference>
<dbReference type="GO" id="GO:0015629">
    <property type="term" value="C:actin cytoskeleton"/>
    <property type="evidence" value="ECO:0000318"/>
    <property type="project" value="GO_Central"/>
</dbReference>
<dbReference type="GO" id="GO:0045178">
    <property type="term" value="C:basal part of cell"/>
    <property type="evidence" value="ECO:0000314"/>
    <property type="project" value="FlyBase"/>
</dbReference>
<dbReference type="GO" id="GO:0005938">
    <property type="term" value="C:cell cortex"/>
    <property type="evidence" value="ECO:0000314"/>
    <property type="project" value="FlyBase"/>
</dbReference>
<dbReference type="GO" id="GO:0005737">
    <property type="term" value="C:cytoplasm"/>
    <property type="evidence" value="ECO:0000314"/>
    <property type="project" value="FlyBase"/>
</dbReference>
<dbReference type="GO" id="GO:0030139">
    <property type="term" value="C:endocytic vesicle"/>
    <property type="evidence" value="ECO:0000314"/>
    <property type="project" value="UniProtKB"/>
</dbReference>
<dbReference type="GO" id="GO:0045172">
    <property type="term" value="C:germline ring canal"/>
    <property type="evidence" value="ECO:0000314"/>
    <property type="project" value="FlyBase"/>
</dbReference>
<dbReference type="GO" id="GO:0030426">
    <property type="term" value="C:growth cone"/>
    <property type="evidence" value="ECO:0000314"/>
    <property type="project" value="FlyBase"/>
</dbReference>
<dbReference type="GO" id="GO:0070865">
    <property type="term" value="C:investment cone"/>
    <property type="evidence" value="ECO:0000314"/>
    <property type="project" value="FlyBase"/>
</dbReference>
<dbReference type="GO" id="GO:0005875">
    <property type="term" value="C:microtubule associated complex"/>
    <property type="evidence" value="ECO:0000314"/>
    <property type="project" value="UniProtKB"/>
</dbReference>
<dbReference type="GO" id="GO:0031476">
    <property type="term" value="C:myosin VI complex"/>
    <property type="evidence" value="ECO:0000353"/>
    <property type="project" value="FlyBase"/>
</dbReference>
<dbReference type="GO" id="GO:0005886">
    <property type="term" value="C:plasma membrane"/>
    <property type="evidence" value="ECO:0000318"/>
    <property type="project" value="GO_Central"/>
</dbReference>
<dbReference type="GO" id="GO:0032991">
    <property type="term" value="C:protein-containing complex"/>
    <property type="evidence" value="ECO:0000353"/>
    <property type="project" value="FlyBase"/>
</dbReference>
<dbReference type="GO" id="GO:0070864">
    <property type="term" value="C:sperm individualization complex"/>
    <property type="evidence" value="ECO:0000314"/>
    <property type="project" value="FlyBase"/>
</dbReference>
<dbReference type="GO" id="GO:0016461">
    <property type="term" value="C:unconventional myosin complex"/>
    <property type="evidence" value="ECO:0000314"/>
    <property type="project" value="UniProtKB"/>
</dbReference>
<dbReference type="GO" id="GO:0003779">
    <property type="term" value="F:actin binding"/>
    <property type="evidence" value="ECO:0000314"/>
    <property type="project" value="UniProtKB"/>
</dbReference>
<dbReference type="GO" id="GO:0051015">
    <property type="term" value="F:actin filament binding"/>
    <property type="evidence" value="ECO:0000314"/>
    <property type="project" value="FlyBase"/>
</dbReference>
<dbReference type="GO" id="GO:0005524">
    <property type="term" value="F:ATP binding"/>
    <property type="evidence" value="ECO:0007669"/>
    <property type="project" value="UniProtKB-KW"/>
</dbReference>
<dbReference type="GO" id="GO:0005516">
    <property type="term" value="F:calmodulin binding"/>
    <property type="evidence" value="ECO:0000353"/>
    <property type="project" value="FlyBase"/>
</dbReference>
<dbReference type="GO" id="GO:0000146">
    <property type="term" value="F:microfilament motor activity"/>
    <property type="evidence" value="ECO:0000318"/>
    <property type="project" value="GO_Central"/>
</dbReference>
<dbReference type="GO" id="GO:0008017">
    <property type="term" value="F:microtubule binding"/>
    <property type="evidence" value="ECO:0000314"/>
    <property type="project" value="UniProtKB"/>
</dbReference>
<dbReference type="GO" id="GO:0032027">
    <property type="term" value="F:myosin light chain binding"/>
    <property type="evidence" value="ECO:0000353"/>
    <property type="project" value="FlyBase"/>
</dbReference>
<dbReference type="GO" id="GO:0070856">
    <property type="term" value="F:myosin VI light chain binding"/>
    <property type="evidence" value="ECO:0000353"/>
    <property type="project" value="FlyBase"/>
</dbReference>
<dbReference type="GO" id="GO:0030036">
    <property type="term" value="P:actin cytoskeleton organization"/>
    <property type="evidence" value="ECO:0000315"/>
    <property type="project" value="FlyBase"/>
</dbReference>
<dbReference type="GO" id="GO:0007015">
    <property type="term" value="P:actin filament organization"/>
    <property type="evidence" value="ECO:0000315"/>
    <property type="project" value="FlyBase"/>
</dbReference>
<dbReference type="GO" id="GO:0030048">
    <property type="term" value="P:actin filament-based movement"/>
    <property type="evidence" value="ECO:0000314"/>
    <property type="project" value="FlyBase"/>
</dbReference>
<dbReference type="GO" id="GO:0045167">
    <property type="term" value="P:asymmetric protein localization involved in cell fate determination"/>
    <property type="evidence" value="ECO:0000315"/>
    <property type="project" value="FlyBase"/>
</dbReference>
<dbReference type="GO" id="GO:0045175">
    <property type="term" value="P:basal protein localization"/>
    <property type="evidence" value="ECO:0000315"/>
    <property type="project" value="FlyBase"/>
</dbReference>
<dbReference type="GO" id="GO:0007298">
    <property type="term" value="P:border follicle cell migration"/>
    <property type="evidence" value="ECO:0000315"/>
    <property type="project" value="FlyBase"/>
</dbReference>
<dbReference type="GO" id="GO:0045217">
    <property type="term" value="P:cell-cell junction maintenance"/>
    <property type="evidence" value="ECO:0000304"/>
    <property type="project" value="FlyBase"/>
</dbReference>
<dbReference type="GO" id="GO:0007391">
    <property type="term" value="P:dorsal closure"/>
    <property type="evidence" value="ECO:0000315"/>
    <property type="project" value="FlyBase"/>
</dbReference>
<dbReference type="GO" id="GO:0040001">
    <property type="term" value="P:establishment of mitotic spindle localization"/>
    <property type="evidence" value="ECO:0000315"/>
    <property type="project" value="FlyBase"/>
</dbReference>
<dbReference type="GO" id="GO:0030317">
    <property type="term" value="P:flagellated sperm motility"/>
    <property type="evidence" value="ECO:0000315"/>
    <property type="project" value="FlyBase"/>
</dbReference>
<dbReference type="GO" id="GO:0007297">
    <property type="term" value="P:follicle cell of egg chamber migration"/>
    <property type="evidence" value="ECO:0000315"/>
    <property type="project" value="FlyBase"/>
</dbReference>
<dbReference type="GO" id="GO:0007560">
    <property type="term" value="P:imaginal disc morphogenesis"/>
    <property type="evidence" value="ECO:0000315"/>
    <property type="project" value="FlyBase"/>
</dbReference>
<dbReference type="GO" id="GO:0008363">
    <property type="term" value="P:larval chitin-based cuticle development"/>
    <property type="evidence" value="ECO:0000315"/>
    <property type="project" value="FlyBase"/>
</dbReference>
<dbReference type="GO" id="GO:0007552">
    <property type="term" value="P:metamorphosis"/>
    <property type="evidence" value="ECO:0000315"/>
    <property type="project" value="FlyBase"/>
</dbReference>
<dbReference type="GO" id="GO:0047497">
    <property type="term" value="P:mitochondrion transport along microtubule"/>
    <property type="evidence" value="ECO:0000314"/>
    <property type="project" value="FlyBase"/>
</dbReference>
<dbReference type="GO" id="GO:0016333">
    <property type="term" value="P:morphogenesis of follicular epithelium"/>
    <property type="evidence" value="ECO:0000315"/>
    <property type="project" value="FlyBase"/>
</dbReference>
<dbReference type="GO" id="GO:0055057">
    <property type="term" value="P:neuroblast division"/>
    <property type="evidence" value="ECO:0000315"/>
    <property type="project" value="FlyBase"/>
</dbReference>
<dbReference type="GO" id="GO:0051647">
    <property type="term" value="P:nucleus localization"/>
    <property type="evidence" value="ECO:0000315"/>
    <property type="project" value="FlyBase"/>
</dbReference>
<dbReference type="GO" id="GO:0006997">
    <property type="term" value="P:nucleus organization"/>
    <property type="evidence" value="ECO:0000315"/>
    <property type="project" value="FlyBase"/>
</dbReference>
<dbReference type="GO" id="GO:0007300">
    <property type="term" value="P:ovarian nurse cell to oocyte transport"/>
    <property type="evidence" value="ECO:0000314"/>
    <property type="project" value="FlyBase"/>
</dbReference>
<dbReference type="GO" id="GO:0045921">
    <property type="term" value="P:positive regulation of exocytosis"/>
    <property type="evidence" value="ECO:0000315"/>
    <property type="project" value="FlyBase"/>
</dbReference>
<dbReference type="GO" id="GO:0008104">
    <property type="term" value="P:protein localization"/>
    <property type="evidence" value="ECO:0000315"/>
    <property type="project" value="FlyBase"/>
</dbReference>
<dbReference type="GO" id="GO:0030589">
    <property type="term" value="P:pseudocleavage involved in syncytial blastoderm formation"/>
    <property type="evidence" value="ECO:0000315"/>
    <property type="project" value="FlyBase"/>
</dbReference>
<dbReference type="GO" id="GO:0032956">
    <property type="term" value="P:regulation of actin cytoskeleton organization"/>
    <property type="evidence" value="ECO:0000315"/>
    <property type="project" value="FlyBase"/>
</dbReference>
<dbReference type="GO" id="GO:0032970">
    <property type="term" value="P:regulation of actin filament-based process"/>
    <property type="evidence" value="ECO:0000315"/>
    <property type="project" value="FlyBase"/>
</dbReference>
<dbReference type="GO" id="GO:0032880">
    <property type="term" value="P:regulation of protein localization"/>
    <property type="evidence" value="ECO:0000315"/>
    <property type="project" value="FlyBase"/>
</dbReference>
<dbReference type="GO" id="GO:0007291">
    <property type="term" value="P:sperm individualization"/>
    <property type="evidence" value="ECO:0000315"/>
    <property type="project" value="FlyBase"/>
</dbReference>
<dbReference type="GO" id="GO:0007283">
    <property type="term" value="P:spermatogenesis"/>
    <property type="evidence" value="ECO:0000315"/>
    <property type="project" value="FlyBase"/>
</dbReference>
<dbReference type="GO" id="GO:0007051">
    <property type="term" value="P:spindle organization"/>
    <property type="evidence" value="ECO:0000315"/>
    <property type="project" value="FlyBase"/>
</dbReference>
<dbReference type="CDD" id="cd21759">
    <property type="entry name" value="CBD_MYO6-like"/>
    <property type="match status" value="1"/>
</dbReference>
<dbReference type="CDD" id="cd01382">
    <property type="entry name" value="MYSc_Myo6"/>
    <property type="match status" value="1"/>
</dbReference>
<dbReference type="CDD" id="cd21958">
    <property type="entry name" value="MyUb_Myo6"/>
    <property type="match status" value="1"/>
</dbReference>
<dbReference type="CDD" id="cd22249">
    <property type="entry name" value="UDM1_RNF168_RNF169-like"/>
    <property type="match status" value="1"/>
</dbReference>
<dbReference type="FunFam" id="1.20.58.530:FF:000006">
    <property type="entry name" value="Putative unconventional myosin-VI"/>
    <property type="match status" value="1"/>
</dbReference>
<dbReference type="FunFam" id="1.20.120.720:FF:000005">
    <property type="entry name" value="unconventional myosin-VI isoform X1"/>
    <property type="match status" value="1"/>
</dbReference>
<dbReference type="FunFam" id="3.40.850.10:FF:000018">
    <property type="entry name" value="unconventional myosin-VI isoform X1"/>
    <property type="match status" value="1"/>
</dbReference>
<dbReference type="Gene3D" id="1.10.10.820">
    <property type="match status" value="1"/>
</dbReference>
<dbReference type="Gene3D" id="1.20.58.530">
    <property type="match status" value="1"/>
</dbReference>
<dbReference type="Gene3D" id="3.30.70.1590">
    <property type="match status" value="1"/>
</dbReference>
<dbReference type="Gene3D" id="6.10.220.10">
    <property type="match status" value="1"/>
</dbReference>
<dbReference type="Gene3D" id="3.40.850.10">
    <property type="entry name" value="Kinesin motor domain"/>
    <property type="match status" value="1"/>
</dbReference>
<dbReference type="Gene3D" id="2.30.30.360">
    <property type="entry name" value="Myosin S1 fragment, N-terminal"/>
    <property type="match status" value="1"/>
</dbReference>
<dbReference type="Gene3D" id="1.20.120.720">
    <property type="entry name" value="Myosin VI head, motor domain, U50 subdomain"/>
    <property type="match status" value="1"/>
</dbReference>
<dbReference type="InterPro" id="IPR036961">
    <property type="entry name" value="Kinesin_motor_dom_sf"/>
</dbReference>
<dbReference type="InterPro" id="IPR049016">
    <property type="entry name" value="MYO6_lever"/>
</dbReference>
<dbReference type="InterPro" id="IPR032412">
    <property type="entry name" value="Myosin-VI_CBD"/>
</dbReference>
<dbReference type="InterPro" id="IPR001609">
    <property type="entry name" value="Myosin_head_motor_dom-like"/>
</dbReference>
<dbReference type="InterPro" id="IPR004009">
    <property type="entry name" value="Myosin_N"/>
</dbReference>
<dbReference type="InterPro" id="IPR008989">
    <property type="entry name" value="Myosin_S1_N"/>
</dbReference>
<dbReference type="InterPro" id="IPR036114">
    <property type="entry name" value="MYSc_Myo6"/>
</dbReference>
<dbReference type="InterPro" id="IPR027417">
    <property type="entry name" value="P-loop_NTPase"/>
</dbReference>
<dbReference type="PANTHER" id="PTHR13140">
    <property type="entry name" value="MYOSIN"/>
    <property type="match status" value="1"/>
</dbReference>
<dbReference type="PANTHER" id="PTHR13140:SF745">
    <property type="entry name" value="UNCONVENTIONAL MYOSIN-VI"/>
    <property type="match status" value="1"/>
</dbReference>
<dbReference type="Pfam" id="PF21521">
    <property type="entry name" value="MYO6_lever"/>
    <property type="match status" value="1"/>
</dbReference>
<dbReference type="Pfam" id="PF16521">
    <property type="entry name" value="Myosin-VI_CBD"/>
    <property type="match status" value="1"/>
</dbReference>
<dbReference type="Pfam" id="PF00063">
    <property type="entry name" value="Myosin_head"/>
    <property type="match status" value="1"/>
</dbReference>
<dbReference type="Pfam" id="PF02736">
    <property type="entry name" value="Myosin_N"/>
    <property type="match status" value="1"/>
</dbReference>
<dbReference type="PRINTS" id="PR00193">
    <property type="entry name" value="MYOSINHEAVY"/>
</dbReference>
<dbReference type="SMART" id="SM00242">
    <property type="entry name" value="MYSc"/>
    <property type="match status" value="1"/>
</dbReference>
<dbReference type="SUPFAM" id="SSF52540">
    <property type="entry name" value="P-loop containing nucleoside triphosphate hydrolases"/>
    <property type="match status" value="1"/>
</dbReference>
<dbReference type="PROSITE" id="PS50096">
    <property type="entry name" value="IQ"/>
    <property type="match status" value="1"/>
</dbReference>
<dbReference type="PROSITE" id="PS51456">
    <property type="entry name" value="MYOSIN_MOTOR"/>
    <property type="match status" value="1"/>
</dbReference>
<dbReference type="PROSITE" id="PS51844">
    <property type="entry name" value="SH3_LIKE"/>
    <property type="match status" value="1"/>
</dbReference>
<proteinExistence type="evidence at transcript level"/>
<organism>
    <name type="scientific">Drosophila melanogaster</name>
    <name type="common">Fruit fly</name>
    <dbReference type="NCBI Taxonomy" id="7227"/>
    <lineage>
        <taxon>Eukaryota</taxon>
        <taxon>Metazoa</taxon>
        <taxon>Ecdysozoa</taxon>
        <taxon>Arthropoda</taxon>
        <taxon>Hexapoda</taxon>
        <taxon>Insecta</taxon>
        <taxon>Pterygota</taxon>
        <taxon>Neoptera</taxon>
        <taxon>Endopterygota</taxon>
        <taxon>Diptera</taxon>
        <taxon>Brachycera</taxon>
        <taxon>Muscomorpha</taxon>
        <taxon>Ephydroidea</taxon>
        <taxon>Drosophilidae</taxon>
        <taxon>Drosophila</taxon>
        <taxon>Sophophora</taxon>
    </lineage>
</organism>
<keyword id="KW-0009">Actin-binding</keyword>
<keyword id="KW-0025">Alternative splicing</keyword>
<keyword id="KW-0067">ATP-binding</keyword>
<keyword id="KW-0112">Calmodulin-binding</keyword>
<keyword id="KW-0175">Coiled coil</keyword>
<keyword id="KW-0963">Cytoplasm</keyword>
<keyword id="KW-0206">Cytoskeleton</keyword>
<keyword id="KW-0217">Developmental protein</keyword>
<keyword id="KW-0505">Motor protein</keyword>
<keyword id="KW-0518">Myosin</keyword>
<keyword id="KW-0547">Nucleotide-binding</keyword>
<keyword id="KW-0597">Phosphoprotein</keyword>
<keyword id="KW-1185">Reference proteome</keyword>
<comment type="function">
    <text evidence="6 7">Myosin is a protein that binds to actin and has ATPase activity that is activated by actin. Together CLIP-190 and jar may coordinate the interaction between the actin and microtubule cytoskeleton. May link endocytic vesicles to microtubules and may be involved in transport in the early embryo and in the dynamic process of dorsal closure. It is believed that its function changes during the life cycle.</text>
</comment>
<comment type="subcellular location">
    <subcellularLocation>
        <location evidence="7">Cytoplasm</location>
        <location evidence="7">Cytoskeleton</location>
    </subcellularLocation>
    <text>Microtubule-associated.</text>
</comment>
<comment type="alternative products">
    <event type="alternative splicing"/>
    <isoform>
        <id>Q01989-1</id>
        <name>B</name>
        <name>G</name>
        <name>J</name>
        <name>K</name>
        <name>Em-3</name>
        <sequence type="displayed"/>
    </isoform>
    <isoform>
        <id>Q01989-2</id>
        <name>H</name>
        <name>C</name>
        <name>Em-1</name>
        <sequence type="described" ref="VSP_003343"/>
    </isoform>
    <isoform>
        <id>Q01989-3</id>
        <name>I</name>
        <name>D</name>
        <name>Em-5</name>
        <sequence type="described" ref="VSP_003344 VSP_003345"/>
    </isoform>
    <isoform>
        <id>Q01989-4</id>
        <name>145 kDa</name>
        <sequence type="not described"/>
    </isoform>
    <text>Additional isoforms seem to exist.</text>
</comment>
<comment type="tissue specificity">
    <text evidence="6 7">Isoform B is present at a higher level in the head and gonads than in the thoraxes. Isoform 145 kDa is found only in the head. CLIP-190 and jar are coexpressed at several times in development and in a number of tissues, including embryonic axonal neuron processes and posterior pole.</text>
</comment>
<comment type="developmental stage">
    <text evidence="6">Isoform B is expressed both maternally and zygotically throughout development with highest level during mid-embryogenesis and adulthood. At these zygotic stages isoform D is also expressed.</text>
</comment>
<comment type="similarity">
    <text evidence="8">Belongs to the TRAFAC class myosin-kinesin ATPase superfamily. Myosin family.</text>
</comment>
<comment type="sequence caution" evidence="8">
    <conflict type="frameshift">
        <sequence resource="EMBL-CDS" id="AAO45215"/>
    </conflict>
</comment>
<reference key="1">
    <citation type="journal article" date="1992" name="J. Cell Biol.">
        <title>An unconventional myosin heavy chain gene from Drosophila melanogaster.</title>
        <authorList>
            <person name="Kellerman K.A."/>
            <person name="Miller K.G."/>
        </authorList>
    </citation>
    <scope>NUCLEOTIDE SEQUENCE [MRNA] (ISOFORM B)</scope>
    <scope>FUNCTION</scope>
    <scope>TISSUE SPECIFICITY</scope>
    <scope>DEVELOPMENTAL STAGE</scope>
    <scope>ALTERNATIVE SPLICING</scope>
    <source>
        <strain>Canton-S</strain>
        <tissue>Embryo</tissue>
        <tissue>Ovary</tissue>
    </source>
</reference>
<reference key="2">
    <citation type="journal article" date="2000" name="Science">
        <title>The genome sequence of Drosophila melanogaster.</title>
        <authorList>
            <person name="Adams M.D."/>
            <person name="Celniker S.E."/>
            <person name="Holt R.A."/>
            <person name="Evans C.A."/>
            <person name="Gocayne J.D."/>
            <person name="Amanatides P.G."/>
            <person name="Scherer S.E."/>
            <person name="Li P.W."/>
            <person name="Hoskins R.A."/>
            <person name="Galle R.F."/>
            <person name="George R.A."/>
            <person name="Lewis S.E."/>
            <person name="Richards S."/>
            <person name="Ashburner M."/>
            <person name="Henderson S.N."/>
            <person name="Sutton G.G."/>
            <person name="Wortman J.R."/>
            <person name="Yandell M.D."/>
            <person name="Zhang Q."/>
            <person name="Chen L.X."/>
            <person name="Brandon R.C."/>
            <person name="Rogers Y.-H.C."/>
            <person name="Blazej R.G."/>
            <person name="Champe M."/>
            <person name="Pfeiffer B.D."/>
            <person name="Wan K.H."/>
            <person name="Doyle C."/>
            <person name="Baxter E.G."/>
            <person name="Helt G."/>
            <person name="Nelson C.R."/>
            <person name="Miklos G.L.G."/>
            <person name="Abril J.F."/>
            <person name="Agbayani A."/>
            <person name="An H.-J."/>
            <person name="Andrews-Pfannkoch C."/>
            <person name="Baldwin D."/>
            <person name="Ballew R.M."/>
            <person name="Basu A."/>
            <person name="Baxendale J."/>
            <person name="Bayraktaroglu L."/>
            <person name="Beasley E.M."/>
            <person name="Beeson K.Y."/>
            <person name="Benos P.V."/>
            <person name="Berman B.P."/>
            <person name="Bhandari D."/>
            <person name="Bolshakov S."/>
            <person name="Borkova D."/>
            <person name="Botchan M.R."/>
            <person name="Bouck J."/>
            <person name="Brokstein P."/>
            <person name="Brottier P."/>
            <person name="Burtis K.C."/>
            <person name="Busam D.A."/>
            <person name="Butler H."/>
            <person name="Cadieu E."/>
            <person name="Center A."/>
            <person name="Chandra I."/>
            <person name="Cherry J.M."/>
            <person name="Cawley S."/>
            <person name="Dahlke C."/>
            <person name="Davenport L.B."/>
            <person name="Davies P."/>
            <person name="de Pablos B."/>
            <person name="Delcher A."/>
            <person name="Deng Z."/>
            <person name="Mays A.D."/>
            <person name="Dew I."/>
            <person name="Dietz S.M."/>
            <person name="Dodson K."/>
            <person name="Doup L.E."/>
            <person name="Downes M."/>
            <person name="Dugan-Rocha S."/>
            <person name="Dunkov B.C."/>
            <person name="Dunn P."/>
            <person name="Durbin K.J."/>
            <person name="Evangelista C.C."/>
            <person name="Ferraz C."/>
            <person name="Ferriera S."/>
            <person name="Fleischmann W."/>
            <person name="Fosler C."/>
            <person name="Gabrielian A.E."/>
            <person name="Garg N.S."/>
            <person name="Gelbart W.M."/>
            <person name="Glasser K."/>
            <person name="Glodek A."/>
            <person name="Gong F."/>
            <person name="Gorrell J.H."/>
            <person name="Gu Z."/>
            <person name="Guan P."/>
            <person name="Harris M."/>
            <person name="Harris N.L."/>
            <person name="Harvey D.A."/>
            <person name="Heiman T.J."/>
            <person name="Hernandez J.R."/>
            <person name="Houck J."/>
            <person name="Hostin D."/>
            <person name="Houston K.A."/>
            <person name="Howland T.J."/>
            <person name="Wei M.-H."/>
            <person name="Ibegwam C."/>
            <person name="Jalali M."/>
            <person name="Kalush F."/>
            <person name="Karpen G.H."/>
            <person name="Ke Z."/>
            <person name="Kennison J.A."/>
            <person name="Ketchum K.A."/>
            <person name="Kimmel B.E."/>
            <person name="Kodira C.D."/>
            <person name="Kraft C.L."/>
            <person name="Kravitz S."/>
            <person name="Kulp D."/>
            <person name="Lai Z."/>
            <person name="Lasko P."/>
            <person name="Lei Y."/>
            <person name="Levitsky A.A."/>
            <person name="Li J.H."/>
            <person name="Li Z."/>
            <person name="Liang Y."/>
            <person name="Lin X."/>
            <person name="Liu X."/>
            <person name="Mattei B."/>
            <person name="McIntosh T.C."/>
            <person name="McLeod M.P."/>
            <person name="McPherson D."/>
            <person name="Merkulov G."/>
            <person name="Milshina N.V."/>
            <person name="Mobarry C."/>
            <person name="Morris J."/>
            <person name="Moshrefi A."/>
            <person name="Mount S.M."/>
            <person name="Moy M."/>
            <person name="Murphy B."/>
            <person name="Murphy L."/>
            <person name="Muzny D.M."/>
            <person name="Nelson D.L."/>
            <person name="Nelson D.R."/>
            <person name="Nelson K.A."/>
            <person name="Nixon K."/>
            <person name="Nusskern D.R."/>
            <person name="Pacleb J.M."/>
            <person name="Palazzolo M."/>
            <person name="Pittman G.S."/>
            <person name="Pan S."/>
            <person name="Pollard J."/>
            <person name="Puri V."/>
            <person name="Reese M.G."/>
            <person name="Reinert K."/>
            <person name="Remington K."/>
            <person name="Saunders R.D.C."/>
            <person name="Scheeler F."/>
            <person name="Shen H."/>
            <person name="Shue B.C."/>
            <person name="Siden-Kiamos I."/>
            <person name="Simpson M."/>
            <person name="Skupski M.P."/>
            <person name="Smith T.J."/>
            <person name="Spier E."/>
            <person name="Spradling A.C."/>
            <person name="Stapleton M."/>
            <person name="Strong R."/>
            <person name="Sun E."/>
            <person name="Svirskas R."/>
            <person name="Tector C."/>
            <person name="Turner R."/>
            <person name="Venter E."/>
            <person name="Wang A.H."/>
            <person name="Wang X."/>
            <person name="Wang Z.-Y."/>
            <person name="Wassarman D.A."/>
            <person name="Weinstock G.M."/>
            <person name="Weissenbach J."/>
            <person name="Williams S.M."/>
            <person name="Woodage T."/>
            <person name="Worley K.C."/>
            <person name="Wu D."/>
            <person name="Yang S."/>
            <person name="Yao Q.A."/>
            <person name="Ye J."/>
            <person name="Yeh R.-F."/>
            <person name="Zaveri J.S."/>
            <person name="Zhan M."/>
            <person name="Zhang G."/>
            <person name="Zhao Q."/>
            <person name="Zheng L."/>
            <person name="Zheng X.H."/>
            <person name="Zhong F.N."/>
            <person name="Zhong W."/>
            <person name="Zhou X."/>
            <person name="Zhu S.C."/>
            <person name="Zhu X."/>
            <person name="Smith H.O."/>
            <person name="Gibbs R.A."/>
            <person name="Myers E.W."/>
            <person name="Rubin G.M."/>
            <person name="Venter J.C."/>
        </authorList>
    </citation>
    <scope>NUCLEOTIDE SEQUENCE [LARGE SCALE GENOMIC DNA]</scope>
    <source>
        <strain>Berkeley</strain>
    </source>
</reference>
<reference key="3">
    <citation type="journal article" date="2002" name="Genome Biol.">
        <title>Annotation of the Drosophila melanogaster euchromatic genome: a systematic review.</title>
        <authorList>
            <person name="Misra S."/>
            <person name="Crosby M.A."/>
            <person name="Mungall C.J."/>
            <person name="Matthews B.B."/>
            <person name="Campbell K.S."/>
            <person name="Hradecky P."/>
            <person name="Huang Y."/>
            <person name="Kaminker J.S."/>
            <person name="Millburn G.H."/>
            <person name="Prochnik S.E."/>
            <person name="Smith C.D."/>
            <person name="Tupy J.L."/>
            <person name="Whitfield E.J."/>
            <person name="Bayraktaroglu L."/>
            <person name="Berman B.P."/>
            <person name="Bettencourt B.R."/>
            <person name="Celniker S.E."/>
            <person name="de Grey A.D.N.J."/>
            <person name="Drysdale R.A."/>
            <person name="Harris N.L."/>
            <person name="Richter J."/>
            <person name="Russo S."/>
            <person name="Schroeder A.J."/>
            <person name="Shu S.Q."/>
            <person name="Stapleton M."/>
            <person name="Yamada C."/>
            <person name="Ashburner M."/>
            <person name="Gelbart W.M."/>
            <person name="Rubin G.M."/>
            <person name="Lewis S.E."/>
        </authorList>
    </citation>
    <scope>GENOME REANNOTATION</scope>
    <scope>ALTERNATIVE SPLICING</scope>
    <source>
        <strain>Berkeley</strain>
    </source>
</reference>
<reference key="4">
    <citation type="journal article" date="2002" name="Genome Biol.">
        <title>A Drosophila full-length cDNA resource.</title>
        <authorList>
            <person name="Stapleton M."/>
            <person name="Carlson J.W."/>
            <person name="Brokstein P."/>
            <person name="Yu C."/>
            <person name="Champe M."/>
            <person name="George R.A."/>
            <person name="Guarin H."/>
            <person name="Kronmiller B."/>
            <person name="Pacleb J.M."/>
            <person name="Park S."/>
            <person name="Wan K.H."/>
            <person name="Rubin G.M."/>
            <person name="Celniker S.E."/>
        </authorList>
    </citation>
    <scope>NUCLEOTIDE SEQUENCE [LARGE SCALE MRNA] (ISOFORM B)</scope>
    <source>
        <strain>Berkeley</strain>
        <tissue>Embryo</tissue>
    </source>
</reference>
<reference key="5">
    <citation type="journal article" date="1998" name="J. Cell Biol.">
        <title>A class VI unconventional myosin is associated with a homologue of a microtubule-binding protein, cytoplasmic linker protein-170, in neurons and at the posterior pole of Drosophila embryos.</title>
        <authorList>
            <person name="Lantz V.A."/>
            <person name="Miller K.G."/>
        </authorList>
    </citation>
    <scope>FUNCTION</scope>
    <scope>SUBCELLULAR LOCATION</scope>
    <scope>TISSUE SPECIFICITY</scope>
</reference>